<accession>Q1J8E7</accession>
<evidence type="ECO:0000255" key="1">
    <source>
        <dbReference type="HAMAP-Rule" id="MF_00918"/>
    </source>
</evidence>
<keyword id="KW-0963">Cytoplasm</keyword>
<keyword id="KW-0238">DNA-binding</keyword>
<keyword id="KW-0804">Transcription</keyword>
<keyword id="KW-0805">Transcription regulation</keyword>
<dbReference type="EMBL" id="CP000262">
    <property type="protein sequence ID" value="ABF37214.1"/>
    <property type="molecule type" value="Genomic_DNA"/>
</dbReference>
<dbReference type="SMR" id="Q1J8E7"/>
<dbReference type="KEGG" id="spi:MGAS10750_Spy0264"/>
<dbReference type="HOGENOM" id="CLU_062974_2_0_9"/>
<dbReference type="Proteomes" id="UP000002434">
    <property type="component" value="Chromosome"/>
</dbReference>
<dbReference type="GO" id="GO:0005829">
    <property type="term" value="C:cytosol"/>
    <property type="evidence" value="ECO:0007669"/>
    <property type="project" value="TreeGrafter"/>
</dbReference>
<dbReference type="GO" id="GO:0003677">
    <property type="term" value="F:DNA binding"/>
    <property type="evidence" value="ECO:0007669"/>
    <property type="project" value="UniProtKB-UniRule"/>
</dbReference>
<dbReference type="GO" id="GO:0006355">
    <property type="term" value="P:regulation of DNA-templated transcription"/>
    <property type="evidence" value="ECO:0007669"/>
    <property type="project" value="UniProtKB-UniRule"/>
</dbReference>
<dbReference type="FunFam" id="1.10.10.200:FF:000003">
    <property type="entry name" value="Probable transcriptional regulatory protein YeeN"/>
    <property type="match status" value="1"/>
</dbReference>
<dbReference type="FunFam" id="3.30.70.980:FF:000004">
    <property type="entry name" value="Probable transcriptional regulatory protein YeeN"/>
    <property type="match status" value="1"/>
</dbReference>
<dbReference type="Gene3D" id="1.10.10.200">
    <property type="match status" value="1"/>
</dbReference>
<dbReference type="Gene3D" id="3.30.70.980">
    <property type="match status" value="2"/>
</dbReference>
<dbReference type="HAMAP" id="MF_00693">
    <property type="entry name" value="Transcrip_reg_TACO1"/>
    <property type="match status" value="1"/>
</dbReference>
<dbReference type="HAMAP" id="MF_00918">
    <property type="entry name" value="Transcrip_reg_TACO1_YeeN"/>
    <property type="match status" value="1"/>
</dbReference>
<dbReference type="InterPro" id="IPR017856">
    <property type="entry name" value="Integrase-like_N"/>
</dbReference>
<dbReference type="InterPro" id="IPR048300">
    <property type="entry name" value="TACO1_YebC-like_2nd/3rd_dom"/>
</dbReference>
<dbReference type="InterPro" id="IPR049083">
    <property type="entry name" value="TACO1_YebC_N"/>
</dbReference>
<dbReference type="InterPro" id="IPR002876">
    <property type="entry name" value="Transcrip_reg_TACO1-like"/>
</dbReference>
<dbReference type="InterPro" id="IPR026564">
    <property type="entry name" value="Transcrip_reg_TACO1-like_dom3"/>
</dbReference>
<dbReference type="InterPro" id="IPR026562">
    <property type="entry name" value="Transcrip_reg_TACO1_YeeN"/>
</dbReference>
<dbReference type="InterPro" id="IPR029072">
    <property type="entry name" value="YebC-like"/>
</dbReference>
<dbReference type="NCBIfam" id="NF001030">
    <property type="entry name" value="PRK00110.1"/>
    <property type="match status" value="1"/>
</dbReference>
<dbReference type="NCBIfam" id="NF009044">
    <property type="entry name" value="PRK12378.1"/>
    <property type="match status" value="1"/>
</dbReference>
<dbReference type="NCBIfam" id="TIGR01033">
    <property type="entry name" value="YebC/PmpR family DNA-binding transcriptional regulator"/>
    <property type="match status" value="1"/>
</dbReference>
<dbReference type="PANTHER" id="PTHR12532">
    <property type="entry name" value="TRANSLATIONAL ACTIVATOR OF CYTOCHROME C OXIDASE 1"/>
    <property type="match status" value="1"/>
</dbReference>
<dbReference type="PANTHER" id="PTHR12532:SF0">
    <property type="entry name" value="TRANSLATIONAL ACTIVATOR OF CYTOCHROME C OXIDASE 1"/>
    <property type="match status" value="1"/>
</dbReference>
<dbReference type="Pfam" id="PF20772">
    <property type="entry name" value="TACO1_YebC_N"/>
    <property type="match status" value="1"/>
</dbReference>
<dbReference type="Pfam" id="PF01709">
    <property type="entry name" value="Transcrip_reg"/>
    <property type="match status" value="1"/>
</dbReference>
<dbReference type="SUPFAM" id="SSF75625">
    <property type="entry name" value="YebC-like"/>
    <property type="match status" value="1"/>
</dbReference>
<comment type="subcellular location">
    <subcellularLocation>
        <location evidence="1">Cytoplasm</location>
    </subcellularLocation>
</comment>
<comment type="similarity">
    <text evidence="1">Belongs to the TACO1 family. YeeN subfamily.</text>
</comment>
<feature type="chain" id="PRO_0000257146" description="Probable transcriptional regulatory protein MGAS10750_Spy0264">
    <location>
        <begin position="1"/>
        <end position="238"/>
    </location>
</feature>
<name>Y264_STRPF</name>
<sequence length="238" mass="25902">MGRKWANIVAKKTAKDGATSKIYAKFGVEIYVAAKQGEPDPELNTALKFVIDRAKQAQVPKHVIDKAIDKAKGNTDETFVEGRYEGFGPNGSMIIVDTLTSNVNRTAANVRTAYGKNGGNMGASGSVSYLFDKKGVIVFAGDDADSVFEQLLEADVDVDDVEAEEGTITVYTAPTDLHKGIQALRDNGVEEFQVTELEMIPQSEVVLEGDDLETFEKLIDALESDDDVQKVYHNVADF</sequence>
<reference key="1">
    <citation type="journal article" date="2006" name="Proc. Natl. Acad. Sci. U.S.A.">
        <title>Molecular genetic anatomy of inter- and intraserotype variation in the human bacterial pathogen group A Streptococcus.</title>
        <authorList>
            <person name="Beres S.B."/>
            <person name="Richter E.W."/>
            <person name="Nagiec M.J."/>
            <person name="Sumby P."/>
            <person name="Porcella S.F."/>
            <person name="DeLeo F.R."/>
            <person name="Musser J.M."/>
        </authorList>
    </citation>
    <scope>NUCLEOTIDE SEQUENCE [LARGE SCALE GENOMIC DNA]</scope>
    <source>
        <strain>MGAS10750</strain>
    </source>
</reference>
<protein>
    <recommendedName>
        <fullName evidence="1">Probable transcriptional regulatory protein MGAS10750_Spy0264</fullName>
    </recommendedName>
</protein>
<gene>
    <name type="ordered locus">MGAS10750_Spy0264</name>
</gene>
<proteinExistence type="inferred from homology"/>
<organism>
    <name type="scientific">Streptococcus pyogenes serotype M4 (strain MGAS10750)</name>
    <dbReference type="NCBI Taxonomy" id="370554"/>
    <lineage>
        <taxon>Bacteria</taxon>
        <taxon>Bacillati</taxon>
        <taxon>Bacillota</taxon>
        <taxon>Bacilli</taxon>
        <taxon>Lactobacillales</taxon>
        <taxon>Streptococcaceae</taxon>
        <taxon>Streptococcus</taxon>
    </lineage>
</organism>